<feature type="chain" id="PRO_0000382237" description="Dihydropyrimidinase-related protein 3">
    <location>
        <begin position="1"/>
        <end position="571"/>
    </location>
</feature>
<feature type="region of interest" description="Disordered" evidence="2">
    <location>
        <begin position="509"/>
        <end position="571"/>
    </location>
</feature>
<feature type="compositionally biased region" description="Polar residues" evidence="2">
    <location>
        <begin position="516"/>
        <end position="529"/>
    </location>
</feature>
<proteinExistence type="evidence at transcript level"/>
<gene>
    <name evidence="4" type="primary">dpysl3</name>
    <name type="ORF">TNeu084b06.1</name>
</gene>
<organism>
    <name type="scientific">Xenopus tropicalis</name>
    <name type="common">Western clawed frog</name>
    <name type="synonym">Silurana tropicalis</name>
    <dbReference type="NCBI Taxonomy" id="8364"/>
    <lineage>
        <taxon>Eukaryota</taxon>
        <taxon>Metazoa</taxon>
        <taxon>Chordata</taxon>
        <taxon>Craniata</taxon>
        <taxon>Vertebrata</taxon>
        <taxon>Euteleostomi</taxon>
        <taxon>Amphibia</taxon>
        <taxon>Batrachia</taxon>
        <taxon>Anura</taxon>
        <taxon>Pipoidea</taxon>
        <taxon>Pipidae</taxon>
        <taxon>Xenopodinae</taxon>
        <taxon>Xenopus</taxon>
        <taxon>Silurana</taxon>
    </lineage>
</organism>
<keyword id="KW-0966">Cell projection</keyword>
<keyword id="KW-0963">Cytoplasm</keyword>
<keyword id="KW-1185">Reference proteome</keyword>
<accession>Q6GL72</accession>
<dbReference type="EMBL" id="CR942629">
    <property type="protein sequence ID" value="CAJ82805.1"/>
    <property type="molecule type" value="mRNA"/>
</dbReference>
<dbReference type="EMBL" id="BC074633">
    <property type="protein sequence ID" value="AAH74633.1"/>
    <property type="molecule type" value="mRNA"/>
</dbReference>
<dbReference type="RefSeq" id="NP_001005637.1">
    <property type="nucleotide sequence ID" value="NM_001005637.1"/>
</dbReference>
<dbReference type="SMR" id="Q6GL72"/>
<dbReference type="FunCoup" id="Q6GL72">
    <property type="interactions" value="465"/>
</dbReference>
<dbReference type="STRING" id="8364.ENSXETP00000036893"/>
<dbReference type="MEROPS" id="M38.976"/>
<dbReference type="PaxDb" id="8364-ENSXETP00000027823"/>
<dbReference type="DNASU" id="448103"/>
<dbReference type="GeneID" id="448103"/>
<dbReference type="KEGG" id="xtr:448103"/>
<dbReference type="AGR" id="Xenbase:XB-GENE-944729"/>
<dbReference type="CTD" id="1809"/>
<dbReference type="Xenbase" id="XB-GENE-944729">
    <property type="gene designation" value="dpysl3"/>
</dbReference>
<dbReference type="eggNOG" id="KOG2584">
    <property type="taxonomic scope" value="Eukaryota"/>
</dbReference>
<dbReference type="InParanoid" id="Q6GL72"/>
<dbReference type="OrthoDB" id="10258955at2759"/>
<dbReference type="Reactome" id="R-XTR-399956">
    <property type="pathway name" value="CRMPs in Sema3A signaling"/>
</dbReference>
<dbReference type="Proteomes" id="UP000008143">
    <property type="component" value="Chromosome 3"/>
</dbReference>
<dbReference type="Bgee" id="ENSXETG00000012718">
    <property type="expression patterns" value="Expressed in central nervous system and 17 other cell types or tissues"/>
</dbReference>
<dbReference type="GO" id="GO:0005737">
    <property type="term" value="C:cytoplasm"/>
    <property type="evidence" value="ECO:0007669"/>
    <property type="project" value="UniProtKB-SubCell"/>
</dbReference>
<dbReference type="GO" id="GO:0030426">
    <property type="term" value="C:growth cone"/>
    <property type="evidence" value="ECO:0007669"/>
    <property type="project" value="UniProtKB-SubCell"/>
</dbReference>
<dbReference type="GO" id="GO:0016810">
    <property type="term" value="F:hydrolase activity, acting on carbon-nitrogen (but not peptide) bonds"/>
    <property type="evidence" value="ECO:0007669"/>
    <property type="project" value="InterPro"/>
</dbReference>
<dbReference type="CDD" id="cd01314">
    <property type="entry name" value="D-HYD"/>
    <property type="match status" value="1"/>
</dbReference>
<dbReference type="FunFam" id="2.30.40.10:FF:000021">
    <property type="entry name" value="Dihydropyrimidinase-related protein 2"/>
    <property type="match status" value="1"/>
</dbReference>
<dbReference type="FunFam" id="3.20.20.140:FF:000174">
    <property type="entry name" value="Dihydropyrimidinase-related protein 2"/>
    <property type="match status" value="1"/>
</dbReference>
<dbReference type="Gene3D" id="3.20.20.140">
    <property type="entry name" value="Metal-dependent hydrolases"/>
    <property type="match status" value="1"/>
</dbReference>
<dbReference type="Gene3D" id="2.30.40.10">
    <property type="entry name" value="Urease, subunit C, domain 1"/>
    <property type="match status" value="1"/>
</dbReference>
<dbReference type="InterPro" id="IPR006680">
    <property type="entry name" value="Amidohydro-rel"/>
</dbReference>
<dbReference type="InterPro" id="IPR011778">
    <property type="entry name" value="Hydantoinase/dihydroPyrase"/>
</dbReference>
<dbReference type="InterPro" id="IPR011059">
    <property type="entry name" value="Metal-dep_hydrolase_composite"/>
</dbReference>
<dbReference type="InterPro" id="IPR032466">
    <property type="entry name" value="Metal_Hydrolase"/>
</dbReference>
<dbReference type="InterPro" id="IPR050378">
    <property type="entry name" value="Metallo-dep_Hydrolases_sf"/>
</dbReference>
<dbReference type="NCBIfam" id="TIGR02033">
    <property type="entry name" value="D-hydantoinase"/>
    <property type="match status" value="1"/>
</dbReference>
<dbReference type="PANTHER" id="PTHR11647:SF57">
    <property type="entry name" value="DIHYDROPYRIMIDINASE-RELATED PROTEIN 3"/>
    <property type="match status" value="1"/>
</dbReference>
<dbReference type="PANTHER" id="PTHR11647">
    <property type="entry name" value="HYDRANTOINASE/DIHYDROPYRIMIDINASE FAMILY MEMBER"/>
    <property type="match status" value="1"/>
</dbReference>
<dbReference type="Pfam" id="PF01979">
    <property type="entry name" value="Amidohydro_1"/>
    <property type="match status" value="1"/>
</dbReference>
<dbReference type="SUPFAM" id="SSF51338">
    <property type="entry name" value="Composite domain of metallo-dependent hydrolases"/>
    <property type="match status" value="2"/>
</dbReference>
<dbReference type="SUPFAM" id="SSF51556">
    <property type="entry name" value="Metallo-dependent hydrolases"/>
    <property type="match status" value="1"/>
</dbReference>
<sequence length="571" mass="62003">MSYQGKKNIPRITSDRLLIKGGRIVNDDQSFYADIYMEDGLIKQIGDNLIVPGGVKTIEANGKMVIPGGIDVHTHLQMPYRGMTTVDDFFQGTKAALAGGTTMIVDHVIPEPEASLTEAFEKWREWADGKTCCDYSLHVDITHWNDSVKQEVEALVKQKGVNSFMVYMAYKDLYQMSNTELYEVFTFLGGLGAIAQVHAENGDIIAQEQNRMLELGITGPEGHVLSRPEELEAEAVFRAITIASQTNCPLYVTKVMSKSSVDLISQARKKGYVVFGEPITASLGTDGTHYWSKNWAKAAAFVTSPPLSPDPTTPDYINSLLASGDLQVTGSAHATFSTAQKAIGKDNFTLIPEGTNGIEERMSVIWDKAVATGKMDENQFVAVTSTNAAKIFNLYPRKGRIAVGSDSDLVIWDPDAVKIVSAKSHHSAAEYNIFEGMELRGAPLVVICQGKIMMEDGTLHVTQGTGRFIPCSPFPDYVYKRIKARTKMAELHAVPRGMYDGPVYDLASTPKAGTPAGSTKGSPTKQTAPVRNLHHSGFSLAGNQGDESGVRSASRRIVAPPGGRSNITSLS</sequence>
<protein>
    <recommendedName>
        <fullName evidence="1">Dihydropyrimidinase-related protein 3</fullName>
        <shortName evidence="1">DRP-3</shortName>
    </recommendedName>
    <alternativeName>
        <fullName evidence="4">Dihydropyrimidinase-like 3</fullName>
    </alternativeName>
</protein>
<name>DPYL3_XENTR</name>
<reference evidence="5" key="1">
    <citation type="submission" date="2006-10" db="EMBL/GenBank/DDBJ databases">
        <authorList>
            <consortium name="Sanger Xenopus tropicalis EST/cDNA project"/>
        </authorList>
    </citation>
    <scope>NUCLEOTIDE SEQUENCE [LARGE SCALE MRNA]</scope>
    <source>
        <tissue evidence="5">Neurula</tissue>
    </source>
</reference>
<reference evidence="5" key="2">
    <citation type="submission" date="2004-06" db="EMBL/GenBank/DDBJ databases">
        <authorList>
            <consortium name="NIH - Xenopus Gene Collection (XGC) project"/>
        </authorList>
    </citation>
    <scope>NUCLEOTIDE SEQUENCE [LARGE SCALE MRNA]</scope>
    <source>
        <tissue evidence="4">Tail bud</tissue>
    </source>
</reference>
<evidence type="ECO:0000250" key="1">
    <source>
        <dbReference type="UniProtKB" id="Q62952"/>
    </source>
</evidence>
<evidence type="ECO:0000256" key="2">
    <source>
        <dbReference type="SAM" id="MobiDB-lite"/>
    </source>
</evidence>
<evidence type="ECO:0000305" key="3"/>
<evidence type="ECO:0000312" key="4">
    <source>
        <dbReference type="EMBL" id="AAH74633.1"/>
    </source>
</evidence>
<evidence type="ECO:0000312" key="5">
    <source>
        <dbReference type="EMBL" id="CAJ82805.1"/>
    </source>
</evidence>
<comment type="function">
    <text evidence="1">Necessary for signaling by class 3 semaphorins and subsequent remodeling of the cytoskeleton. Plays a role in axon guidance, neuronal growth cone collapse and cell migration (By similarity).</text>
</comment>
<comment type="subunit">
    <text evidence="1">Homotetramer and heterotetramer.</text>
</comment>
<comment type="subcellular location">
    <subcellularLocation>
        <location evidence="1">Cytoplasm</location>
    </subcellularLocation>
    <subcellularLocation>
        <location evidence="1">Cell projection</location>
        <location evidence="1">Growth cone</location>
    </subcellularLocation>
</comment>
<comment type="similarity">
    <text evidence="3">Belongs to the metallo-dependent hydrolases superfamily. Hydantoinase/dihydropyrimidinase family.</text>
</comment>
<comment type="caution">
    <text evidence="3">Lacks most of the conserved residues that are essential for binding the metal cofactor and hence for dihydropyrimidinase activity. Its enzyme activity is therefore unsure.</text>
</comment>